<protein>
    <recommendedName>
        <fullName>Elongation factor 1-alpha</fullName>
        <shortName>EF-1-alpha</shortName>
    </recommendedName>
</protein>
<accession>P84315</accession>
<accession>P55276</accession>
<feature type="chain" id="PRO_0000090912" description="Elongation factor 1-alpha">
    <location>
        <begin position="1" status="less than"/>
        <end position="413" status="greater than"/>
    </location>
</feature>
<feature type="domain" description="tr-type G" evidence="2">
    <location>
        <begin position="1" status="less than"/>
        <end position="228"/>
    </location>
</feature>
<feature type="binding site" evidence="1">
    <location>
        <begin position="1" status="less than"/>
        <end position="7"/>
    </location>
    <ligand>
        <name>GTP</name>
        <dbReference type="ChEBI" id="CHEBI:37565"/>
    </ligand>
</feature>
<feature type="binding site" evidence="1">
    <location>
        <begin position="77"/>
        <end position="81"/>
    </location>
    <ligand>
        <name>GTP</name>
        <dbReference type="ChEBI" id="CHEBI:37565"/>
    </ligand>
</feature>
<feature type="binding site" evidence="1">
    <location>
        <begin position="139"/>
        <end position="142"/>
    </location>
    <ligand>
        <name>GTP</name>
        <dbReference type="ChEBI" id="CHEBI:37565"/>
    </ligand>
</feature>
<feature type="modified residue" description="5-glutamyl glycerylphosphorylethanolamine" evidence="1">
    <location>
        <position position="287"/>
    </location>
</feature>
<feature type="modified residue" description="5-glutamyl glycerylphosphorylethanolamine" evidence="1">
    <location>
        <position position="360"/>
    </location>
</feature>
<feature type="non-terminal residue">
    <location>
        <position position="1"/>
    </location>
</feature>
<feature type="non-terminal residue">
    <location>
        <position position="413"/>
    </location>
</feature>
<sequence length="413" mass="45120">HVDSGKSTTTGHLIYKCGGIDKRTIEKFEKEAQEMGKGSFKYAWVLDKLKAERERGITIDIALWKFETAKYYVTIIDAPGHRDFIKNMITGTSQADCAVLIVAAGTGEFEAGISKNGQTREHALLAFTLGVKQLIVGVNKMDSTEPPYSESRFEEIKKEVSSYIKKIGYNPAAVAFVPISGWHGDNMLEASTKMPWFKGWNVERKEGKAEGKCLIEALDAILPPARPTDKALRLPLQDVYKIGGIGTVPVGRVETGILKPGTIVVFAPANITTEVKSVEMHHEALQEAVPGDNVGFNVKNVSVKELRRGYVAGDSKNNPPKGAADFTAQVIVLNHPGQISNGYTPVLDCHTAHIACKFAEIKEKVDRRTGKSTEDNPKSIKSGDAAIVNLVPSKPLCVESFQEFPPLGRFAVR</sequence>
<name>EF1A_HELVI</name>
<reference key="1">
    <citation type="journal article" date="1995" name="Mol. Biol. Evol.">
        <title>A highly conserved nuclear gene for low-level phylogenetics: elongation factor-1 alpha recovers morphology-based tree for heliothine moths.</title>
        <authorList>
            <person name="Cho S."/>
            <person name="Mitchell A."/>
            <person name="Regier J.C."/>
            <person name="Mitter C."/>
            <person name="Poole R.W."/>
            <person name="Friedlander T.P."/>
            <person name="Zhao S."/>
        </authorList>
    </citation>
    <scope>NUCLEOTIDE SEQUENCE [GENOMIC DNA]</scope>
</reference>
<keyword id="KW-0963">Cytoplasm</keyword>
<keyword id="KW-0251">Elongation factor</keyword>
<keyword id="KW-0342">GTP-binding</keyword>
<keyword id="KW-0547">Nucleotide-binding</keyword>
<keyword id="KW-0597">Phosphoprotein</keyword>
<keyword id="KW-0648">Protein biosynthesis</keyword>
<organism>
    <name type="scientific">Heliothis virescens</name>
    <name type="common">Tobacco budworm moth</name>
    <dbReference type="NCBI Taxonomy" id="7102"/>
    <lineage>
        <taxon>Eukaryota</taxon>
        <taxon>Metazoa</taxon>
        <taxon>Ecdysozoa</taxon>
        <taxon>Arthropoda</taxon>
        <taxon>Hexapoda</taxon>
        <taxon>Insecta</taxon>
        <taxon>Pterygota</taxon>
        <taxon>Neoptera</taxon>
        <taxon>Endopterygota</taxon>
        <taxon>Lepidoptera</taxon>
        <taxon>Glossata</taxon>
        <taxon>Ditrysia</taxon>
        <taxon>Noctuoidea</taxon>
        <taxon>Noctuidae</taxon>
        <taxon>Heliothinae</taxon>
        <taxon>Heliothis</taxon>
    </lineage>
</organism>
<evidence type="ECO:0000250" key="1"/>
<evidence type="ECO:0000255" key="2">
    <source>
        <dbReference type="PROSITE-ProRule" id="PRU01059"/>
    </source>
</evidence>
<proteinExistence type="inferred from homology"/>
<comment type="function">
    <text>This protein promotes the GTP-dependent binding of aminoacyl-tRNA to the A-site of ribosomes during protein biosynthesis.</text>
</comment>
<comment type="subcellular location">
    <subcellularLocation>
        <location>Cytoplasm</location>
    </subcellularLocation>
</comment>
<comment type="similarity">
    <text evidence="2">Belongs to the TRAFAC class translation factor GTPase superfamily. Classic translation factor GTPase family. EF-Tu/EF-1A subfamily.</text>
</comment>
<dbReference type="EMBL" id="U20135">
    <property type="protein sequence ID" value="AAA93215.1"/>
    <property type="molecule type" value="Genomic_DNA"/>
</dbReference>
<dbReference type="SMR" id="P84315"/>
<dbReference type="GO" id="GO:0005737">
    <property type="term" value="C:cytoplasm"/>
    <property type="evidence" value="ECO:0007669"/>
    <property type="project" value="UniProtKB-SubCell"/>
</dbReference>
<dbReference type="GO" id="GO:0005525">
    <property type="term" value="F:GTP binding"/>
    <property type="evidence" value="ECO:0007669"/>
    <property type="project" value="UniProtKB-KW"/>
</dbReference>
<dbReference type="GO" id="GO:0003924">
    <property type="term" value="F:GTPase activity"/>
    <property type="evidence" value="ECO:0007669"/>
    <property type="project" value="InterPro"/>
</dbReference>
<dbReference type="GO" id="GO:0003746">
    <property type="term" value="F:translation elongation factor activity"/>
    <property type="evidence" value="ECO:0007669"/>
    <property type="project" value="UniProtKB-KW"/>
</dbReference>
<dbReference type="CDD" id="cd01883">
    <property type="entry name" value="EF1_alpha"/>
    <property type="match status" value="1"/>
</dbReference>
<dbReference type="CDD" id="cd03693">
    <property type="entry name" value="EF1_alpha_II"/>
    <property type="match status" value="1"/>
</dbReference>
<dbReference type="CDD" id="cd03705">
    <property type="entry name" value="EF1_alpha_III"/>
    <property type="match status" value="1"/>
</dbReference>
<dbReference type="FunFam" id="2.40.30.10:FF:000003">
    <property type="entry name" value="Elongation factor 1-alpha"/>
    <property type="match status" value="1"/>
</dbReference>
<dbReference type="FunFam" id="2.40.30.10:FF:000005">
    <property type="entry name" value="Elongation factor 1-alpha"/>
    <property type="match status" value="1"/>
</dbReference>
<dbReference type="FunFam" id="3.40.50.300:FF:000090">
    <property type="entry name" value="Elongation factor 1-alpha"/>
    <property type="match status" value="1"/>
</dbReference>
<dbReference type="Gene3D" id="3.40.50.300">
    <property type="entry name" value="P-loop containing nucleotide triphosphate hydrolases"/>
    <property type="match status" value="1"/>
</dbReference>
<dbReference type="Gene3D" id="2.40.30.10">
    <property type="entry name" value="Translation factors"/>
    <property type="match status" value="2"/>
</dbReference>
<dbReference type="InterPro" id="IPR004161">
    <property type="entry name" value="EFTu-like_2"/>
</dbReference>
<dbReference type="InterPro" id="IPR031157">
    <property type="entry name" value="G_TR_CS"/>
</dbReference>
<dbReference type="InterPro" id="IPR054696">
    <property type="entry name" value="GTP-eEF1A_C"/>
</dbReference>
<dbReference type="InterPro" id="IPR027417">
    <property type="entry name" value="P-loop_NTPase"/>
</dbReference>
<dbReference type="InterPro" id="IPR000795">
    <property type="entry name" value="T_Tr_GTP-bd_dom"/>
</dbReference>
<dbReference type="InterPro" id="IPR050100">
    <property type="entry name" value="TRAFAC_GTPase_members"/>
</dbReference>
<dbReference type="InterPro" id="IPR009000">
    <property type="entry name" value="Transl_B-barrel_sf"/>
</dbReference>
<dbReference type="InterPro" id="IPR009001">
    <property type="entry name" value="Transl_elong_EF1A/Init_IF2_C"/>
</dbReference>
<dbReference type="InterPro" id="IPR004539">
    <property type="entry name" value="Transl_elong_EF1A_euk/arc"/>
</dbReference>
<dbReference type="NCBIfam" id="TIGR00483">
    <property type="entry name" value="EF-1_alpha"/>
    <property type="match status" value="1"/>
</dbReference>
<dbReference type="NCBIfam" id="NF008969">
    <property type="entry name" value="PRK12317.1"/>
    <property type="match status" value="1"/>
</dbReference>
<dbReference type="PANTHER" id="PTHR23115">
    <property type="entry name" value="TRANSLATION FACTOR"/>
    <property type="match status" value="1"/>
</dbReference>
<dbReference type="Pfam" id="PF22594">
    <property type="entry name" value="GTP-eEF1A_C"/>
    <property type="match status" value="1"/>
</dbReference>
<dbReference type="Pfam" id="PF00009">
    <property type="entry name" value="GTP_EFTU"/>
    <property type="match status" value="1"/>
</dbReference>
<dbReference type="Pfam" id="PF03144">
    <property type="entry name" value="GTP_EFTU_D2"/>
    <property type="match status" value="1"/>
</dbReference>
<dbReference type="PRINTS" id="PR00315">
    <property type="entry name" value="ELONGATNFCT"/>
</dbReference>
<dbReference type="SUPFAM" id="SSF50465">
    <property type="entry name" value="EF-Tu/eEF-1alpha/eIF2-gamma C-terminal domain"/>
    <property type="match status" value="1"/>
</dbReference>
<dbReference type="SUPFAM" id="SSF52540">
    <property type="entry name" value="P-loop containing nucleoside triphosphate hydrolases"/>
    <property type="match status" value="1"/>
</dbReference>
<dbReference type="SUPFAM" id="SSF50447">
    <property type="entry name" value="Translation proteins"/>
    <property type="match status" value="1"/>
</dbReference>
<dbReference type="PROSITE" id="PS00301">
    <property type="entry name" value="G_TR_1"/>
    <property type="match status" value="1"/>
</dbReference>
<dbReference type="PROSITE" id="PS51722">
    <property type="entry name" value="G_TR_2"/>
    <property type="match status" value="1"/>
</dbReference>